<dbReference type="GO" id="GO:0005576">
    <property type="term" value="C:extracellular region"/>
    <property type="evidence" value="ECO:0007669"/>
    <property type="project" value="UniProtKB-SubCell"/>
</dbReference>
<dbReference type="GO" id="GO:0090729">
    <property type="term" value="F:toxin activity"/>
    <property type="evidence" value="ECO:0007669"/>
    <property type="project" value="UniProtKB-KW"/>
</dbReference>
<dbReference type="GO" id="GO:0008217">
    <property type="term" value="P:regulation of blood pressure"/>
    <property type="evidence" value="ECO:0007669"/>
    <property type="project" value="UniProtKB-KW"/>
</dbReference>
<organism>
    <name type="scientific">Phasmahyla jandaia</name>
    <name type="common">Jandaia leaf frog</name>
    <name type="synonym">Phyllomedusa jandaia</name>
    <dbReference type="NCBI Taxonomy" id="762504"/>
    <lineage>
        <taxon>Eukaryota</taxon>
        <taxon>Metazoa</taxon>
        <taxon>Chordata</taxon>
        <taxon>Craniata</taxon>
        <taxon>Vertebrata</taxon>
        <taxon>Euteleostomi</taxon>
        <taxon>Amphibia</taxon>
        <taxon>Batrachia</taxon>
        <taxon>Anura</taxon>
        <taxon>Neobatrachia</taxon>
        <taxon>Hyloidea</taxon>
        <taxon>Hylidae</taxon>
        <taxon>Phyllomedusinae</taxon>
        <taxon>Phasmahyla</taxon>
    </lineage>
</organism>
<protein>
    <recommendedName>
        <fullName evidence="3">Bradykinin-potentiating peptide Phypo Xa</fullName>
        <shortName>BPP</shortName>
    </recommendedName>
</protein>
<reference evidence="4" key="1">
    <citation type="journal article" date="2011" name="Toxicon">
        <title>Peptidomic dissection of the skin secretion of Phasmahyla jandaia (Bokermann and Sazima, 1978) (Anura, Hylidae, Phyllomedusinae).</title>
        <authorList>
            <person name="Rates B."/>
            <person name="Silva L.P."/>
            <person name="Ireno I.C."/>
            <person name="Leite F.S."/>
            <person name="Borges M.H."/>
            <person name="Bloch C. Jr."/>
            <person name="De Lima M.E."/>
            <person name="Pimenta A.M."/>
        </authorList>
    </citation>
    <scope>PROTEIN SEQUENCE</scope>
    <scope>SUBCELLULAR LOCATION</scope>
    <scope>TISSUE SPECIFICITY</scope>
    <scope>MASS SPECTROMETRY</scope>
    <scope>PYROGLUTAMATE FORMATION AT GLN-1</scope>
    <source>
        <tissue evidence="2">Skin secretion</tissue>
    </source>
</reference>
<keyword id="KW-0903">Direct protein sequencing</keyword>
<keyword id="KW-0382">Hypotensive agent</keyword>
<keyword id="KW-0873">Pyrrolidone carboxylic acid</keyword>
<keyword id="KW-0964">Secreted</keyword>
<keyword id="KW-0800">Toxin</keyword>
<proteinExistence type="evidence at protein level"/>
<name>BPPXA_PHAJA</name>
<sequence length="10" mass="1232">QFRPSYQIPP</sequence>
<evidence type="ECO:0000250" key="1">
    <source>
        <dbReference type="UniProtKB" id="P85165"/>
    </source>
</evidence>
<evidence type="ECO:0000269" key="2">
    <source>
    </source>
</evidence>
<evidence type="ECO:0000303" key="3">
    <source>
    </source>
</evidence>
<evidence type="ECO:0000305" key="4"/>
<accession>P86643</accession>
<feature type="peptide" id="PRO_0000404637" description="Bradykinin-potentiating peptide Phypo Xa" evidence="2">
    <location>
        <begin position="1"/>
        <end position="10"/>
    </location>
</feature>
<feature type="modified residue" description="Pyrrolidone carboxylic acid" evidence="2">
    <location>
        <position position="1"/>
    </location>
</feature>
<feature type="unsure residue" description="I or L" evidence="2">
    <location>
        <position position="8"/>
    </location>
</feature>
<comment type="function">
    <text evidence="1">This peptide both inhibits the activity of the angiotensin-converting enzyme and enhances the action of bradykinin by inhibiting the peptidases that inactivate it. It acts as an indirect hypotensive agent (By similarity).</text>
</comment>
<comment type="subcellular location">
    <subcellularLocation>
        <location evidence="2">Secreted</location>
    </subcellularLocation>
</comment>
<comment type="tissue specificity">
    <text evidence="2">Expressed by the skin glands.</text>
</comment>
<comment type="mass spectrometry" mass="1214.9" method="MALDI" evidence="2"/>
<comment type="similarity">
    <text evidence="4">Belongs to the bradykinin-potentiating peptide family.</text>
</comment>